<gene>
    <name evidence="1" type="primary">rplN</name>
    <name evidence="1" type="synonym">rpl14</name>
    <name type="ordered locus">Ava_0701</name>
</gene>
<keyword id="KW-0687">Ribonucleoprotein</keyword>
<keyword id="KW-0689">Ribosomal protein</keyword>
<keyword id="KW-0694">RNA-binding</keyword>
<keyword id="KW-0699">rRNA-binding</keyword>
<dbReference type="EMBL" id="CP000117">
    <property type="protein sequence ID" value="ABA20325.1"/>
    <property type="molecule type" value="Genomic_DNA"/>
</dbReference>
<dbReference type="RefSeq" id="WP_010998343.1">
    <property type="nucleotide sequence ID" value="NC_007413.1"/>
</dbReference>
<dbReference type="SMR" id="Q3MFB1"/>
<dbReference type="STRING" id="240292.Ava_0701"/>
<dbReference type="GeneID" id="58723359"/>
<dbReference type="KEGG" id="ava:Ava_0701"/>
<dbReference type="eggNOG" id="COG0093">
    <property type="taxonomic scope" value="Bacteria"/>
</dbReference>
<dbReference type="HOGENOM" id="CLU_095071_2_1_3"/>
<dbReference type="Proteomes" id="UP000002533">
    <property type="component" value="Chromosome"/>
</dbReference>
<dbReference type="GO" id="GO:0022625">
    <property type="term" value="C:cytosolic large ribosomal subunit"/>
    <property type="evidence" value="ECO:0007669"/>
    <property type="project" value="TreeGrafter"/>
</dbReference>
<dbReference type="GO" id="GO:0070180">
    <property type="term" value="F:large ribosomal subunit rRNA binding"/>
    <property type="evidence" value="ECO:0007669"/>
    <property type="project" value="TreeGrafter"/>
</dbReference>
<dbReference type="GO" id="GO:0003735">
    <property type="term" value="F:structural constituent of ribosome"/>
    <property type="evidence" value="ECO:0007669"/>
    <property type="project" value="InterPro"/>
</dbReference>
<dbReference type="GO" id="GO:0006412">
    <property type="term" value="P:translation"/>
    <property type="evidence" value="ECO:0007669"/>
    <property type="project" value="UniProtKB-UniRule"/>
</dbReference>
<dbReference type="CDD" id="cd00337">
    <property type="entry name" value="Ribosomal_uL14"/>
    <property type="match status" value="1"/>
</dbReference>
<dbReference type="FunFam" id="2.40.150.20:FF:000001">
    <property type="entry name" value="50S ribosomal protein L14"/>
    <property type="match status" value="1"/>
</dbReference>
<dbReference type="Gene3D" id="2.40.150.20">
    <property type="entry name" value="Ribosomal protein L14"/>
    <property type="match status" value="1"/>
</dbReference>
<dbReference type="HAMAP" id="MF_01367">
    <property type="entry name" value="Ribosomal_uL14"/>
    <property type="match status" value="1"/>
</dbReference>
<dbReference type="InterPro" id="IPR000218">
    <property type="entry name" value="Ribosomal_uL14"/>
</dbReference>
<dbReference type="InterPro" id="IPR005745">
    <property type="entry name" value="Ribosomal_uL14_bac-type"/>
</dbReference>
<dbReference type="InterPro" id="IPR019972">
    <property type="entry name" value="Ribosomal_uL14_CS"/>
</dbReference>
<dbReference type="InterPro" id="IPR036853">
    <property type="entry name" value="Ribosomal_uL14_sf"/>
</dbReference>
<dbReference type="NCBIfam" id="TIGR01067">
    <property type="entry name" value="rplN_bact"/>
    <property type="match status" value="1"/>
</dbReference>
<dbReference type="PANTHER" id="PTHR11761">
    <property type="entry name" value="50S/60S RIBOSOMAL PROTEIN L14/L23"/>
    <property type="match status" value="1"/>
</dbReference>
<dbReference type="PANTHER" id="PTHR11761:SF3">
    <property type="entry name" value="LARGE RIBOSOMAL SUBUNIT PROTEIN UL14M"/>
    <property type="match status" value="1"/>
</dbReference>
<dbReference type="Pfam" id="PF00238">
    <property type="entry name" value="Ribosomal_L14"/>
    <property type="match status" value="1"/>
</dbReference>
<dbReference type="SMART" id="SM01374">
    <property type="entry name" value="Ribosomal_L14"/>
    <property type="match status" value="1"/>
</dbReference>
<dbReference type="SUPFAM" id="SSF50193">
    <property type="entry name" value="Ribosomal protein L14"/>
    <property type="match status" value="1"/>
</dbReference>
<dbReference type="PROSITE" id="PS00049">
    <property type="entry name" value="RIBOSOMAL_L14"/>
    <property type="match status" value="1"/>
</dbReference>
<name>RL14_TRIV2</name>
<organism>
    <name type="scientific">Trichormus variabilis (strain ATCC 29413 / PCC 7937)</name>
    <name type="common">Anabaena variabilis</name>
    <dbReference type="NCBI Taxonomy" id="240292"/>
    <lineage>
        <taxon>Bacteria</taxon>
        <taxon>Bacillati</taxon>
        <taxon>Cyanobacteriota</taxon>
        <taxon>Cyanophyceae</taxon>
        <taxon>Nostocales</taxon>
        <taxon>Nostocaceae</taxon>
        <taxon>Trichormus</taxon>
    </lineage>
</organism>
<reference key="1">
    <citation type="journal article" date="2014" name="Stand. Genomic Sci.">
        <title>Complete genome sequence of Anabaena variabilis ATCC 29413.</title>
        <authorList>
            <person name="Thiel T."/>
            <person name="Pratte B.S."/>
            <person name="Zhong J."/>
            <person name="Goodwin L."/>
            <person name="Copeland A."/>
            <person name="Lucas S."/>
            <person name="Han C."/>
            <person name="Pitluck S."/>
            <person name="Land M.L."/>
            <person name="Kyrpides N.C."/>
            <person name="Woyke T."/>
        </authorList>
    </citation>
    <scope>NUCLEOTIDE SEQUENCE [LARGE SCALE GENOMIC DNA]</scope>
    <source>
        <strain>ATCC 29413 / PCC 7937</strain>
    </source>
</reference>
<proteinExistence type="inferred from homology"/>
<sequence>MIQPQTYLNVADNSGARKLMCIRVLGAGNSRYGFIGDKIIAVVKDATPNMAVKKSDVVEAVIVRTRHHIRRDSGMTIRFDDNAAVIINKDGNPRGTRVFGPVARELRDKNFTKIVSLAPEVL</sequence>
<comment type="function">
    <text evidence="1">Binds to 23S rRNA. Forms part of two intersubunit bridges in the 70S ribosome.</text>
</comment>
<comment type="subunit">
    <text evidence="1">Part of the 50S ribosomal subunit. Forms a cluster with proteins L3 and L19. In the 70S ribosome, L14 and L19 interact and together make contacts with the 16S rRNA in bridges B5 and B8.</text>
</comment>
<comment type="similarity">
    <text evidence="1">Belongs to the universal ribosomal protein uL14 family.</text>
</comment>
<evidence type="ECO:0000255" key="1">
    <source>
        <dbReference type="HAMAP-Rule" id="MF_01367"/>
    </source>
</evidence>
<evidence type="ECO:0000305" key="2"/>
<protein>
    <recommendedName>
        <fullName evidence="1">Large ribosomal subunit protein uL14</fullName>
    </recommendedName>
    <alternativeName>
        <fullName evidence="2">50S ribosomal protein L14</fullName>
    </alternativeName>
</protein>
<accession>Q3MFB1</accession>
<feature type="chain" id="PRO_1000055504" description="Large ribosomal subunit protein uL14">
    <location>
        <begin position="1"/>
        <end position="122"/>
    </location>
</feature>